<sequence>MATFELIPYRLYLSQSNTWIHRIKAEIKIYIVALLWISIFIFSYFKLCIIALSLIAISFTIRSKQNIIQKHLLQTLLMTFLTTVLSFSVAISYKQYAEQEQSQYLSDSKKYKNSSSYYYIQIANDQRIKRQYLITTLKPSLYFFITIYSIKLVMITTSPEVLVITIYRSRIINKIFKNELLFIFLLSSHIVTSIINRIDKVIQVTSLRGSLNLYNSLTRPLMFSLLIFQVFFLEIIRESKEIAQALYTRNLNQENNNFLKIYTVKSNFSDRLNIIISTLYFIILALA</sequence>
<name>YCF92_PYRYE</name>
<feature type="chain" id="PRO_0000277377" description="Uncharacterized protein ycf92">
    <location>
        <begin position="1"/>
        <end position="287"/>
    </location>
</feature>
<feature type="transmembrane region" description="Helical" evidence="1">
    <location>
        <begin position="32"/>
        <end position="52"/>
    </location>
</feature>
<feature type="transmembrane region" description="Helical" evidence="1">
    <location>
        <begin position="72"/>
        <end position="92"/>
    </location>
</feature>
<feature type="transmembrane region" description="Helical" evidence="1">
    <location>
        <begin position="133"/>
        <end position="153"/>
    </location>
</feature>
<feature type="transmembrane region" description="Helical" evidence="1">
    <location>
        <begin position="175"/>
        <end position="195"/>
    </location>
</feature>
<feature type="transmembrane region" description="Helical" evidence="1">
    <location>
        <begin position="216"/>
        <end position="236"/>
    </location>
</feature>
<feature type="transmembrane region" description="Helical" evidence="1">
    <location>
        <begin position="266"/>
        <end position="286"/>
    </location>
</feature>
<organism>
    <name type="scientific">Pyropia yezoensis</name>
    <name type="common">Susabi-nori</name>
    <name type="synonym">Porphyra yezoensis</name>
    <dbReference type="NCBI Taxonomy" id="2788"/>
    <lineage>
        <taxon>Eukaryota</taxon>
        <taxon>Rhodophyta</taxon>
        <taxon>Bangiophyceae</taxon>
        <taxon>Bangiales</taxon>
        <taxon>Bangiaceae</taxon>
        <taxon>Pyropia</taxon>
    </lineage>
</organism>
<dbReference type="EMBL" id="AP006715">
    <property type="protein sequence ID" value="BAE92363.1"/>
    <property type="molecule type" value="Genomic_DNA"/>
</dbReference>
<dbReference type="RefSeq" id="YP_536920.1">
    <property type="nucleotide sequence ID" value="NC_007932.1"/>
</dbReference>
<dbReference type="GO" id="GO:0031969">
    <property type="term" value="C:chloroplast membrane"/>
    <property type="evidence" value="ECO:0007669"/>
    <property type="project" value="UniProtKB-SubCell"/>
</dbReference>
<evidence type="ECO:0000255" key="1"/>
<evidence type="ECO:0000305" key="2"/>
<protein>
    <recommendedName>
        <fullName>Uncharacterized protein ycf92</fullName>
    </recommendedName>
</protein>
<gene>
    <name type="primary">ycf92</name>
</gene>
<comment type="subcellular location">
    <subcellularLocation>
        <location evidence="2">Plastid</location>
        <location evidence="2">Chloroplast membrane</location>
        <topology evidence="2">Multi-pass membrane protein</topology>
    </subcellularLocation>
</comment>
<comment type="similarity">
    <text evidence="2">Belongs to the ycf92 family.</text>
</comment>
<accession>Q1XDP8</accession>
<keyword id="KW-0150">Chloroplast</keyword>
<keyword id="KW-0472">Membrane</keyword>
<keyword id="KW-0934">Plastid</keyword>
<keyword id="KW-0812">Transmembrane</keyword>
<keyword id="KW-1133">Transmembrane helix</keyword>
<reference key="1">
    <citation type="submission" date="2003-11" db="EMBL/GenBank/DDBJ databases">
        <title>Whole genome sequence of Porphyra yezoensis chloroplast.</title>
        <authorList>
            <person name="Kunimoto M."/>
            <person name="Morishima K."/>
            <person name="Yoshikawa M."/>
            <person name="Fukuda S."/>
            <person name="Kobayashi T."/>
            <person name="Kobayashi M."/>
            <person name="Okazaki T."/>
            <person name="Ohara I."/>
            <person name="Nakayama I."/>
        </authorList>
    </citation>
    <scope>NUCLEOTIDE SEQUENCE [LARGE SCALE GENOMIC DNA]</scope>
    <source>
        <strain>U-51</strain>
    </source>
</reference>
<geneLocation type="chloroplast"/>
<proteinExistence type="inferred from homology"/>